<comment type="function">
    <text evidence="1">Modifies the topological state of DNA by introducing positive supercoils in an ATP-dependent process, increasing the linking number in steps of +1. Binds to single-stranded DNA, transiently cleaves and then rejoins the ends, introducing a positive supercoil in the process. The scissile phosphodiester is attacked by the catalytic tyrosine of the enzyme, resulting in the formation of a DNA-(5'-phosphotyrosyl)-enzyme intermediate. Probably involved in rewinding DNA strands in regions of the chromosome that have opened up to allow replication, transcription, DNA repair and/or for DNA protection.</text>
</comment>
<comment type="catalytic activity">
    <reaction evidence="1">
        <text>ATP + H2O = ADP + phosphate + H(+)</text>
        <dbReference type="Rhea" id="RHEA:13065"/>
        <dbReference type="ChEBI" id="CHEBI:15377"/>
        <dbReference type="ChEBI" id="CHEBI:15378"/>
        <dbReference type="ChEBI" id="CHEBI:30616"/>
        <dbReference type="ChEBI" id="CHEBI:43474"/>
        <dbReference type="ChEBI" id="CHEBI:456216"/>
    </reaction>
</comment>
<comment type="cofactor">
    <cofactor evidence="1">
        <name>Zn(2+)</name>
        <dbReference type="ChEBI" id="CHEBI:29105"/>
    </cofactor>
    <text evidence="1">Binds 1 zinc ion per subunit.</text>
</comment>
<comment type="cofactor">
    <cofactor evidence="1">
        <name>Mg(2+)</name>
        <dbReference type="ChEBI" id="CHEBI:18420"/>
    </cofactor>
</comment>
<comment type="subunit">
    <text evidence="1">Monomer.</text>
</comment>
<comment type="subcellular location">
    <subcellularLocation>
        <location evidence="1">Cytoplasm</location>
    </subcellularLocation>
</comment>
<comment type="domain">
    <text evidence="1">Introduction of positive supercoils requires the cooperation of both domains. The helicase-like domain probably does not directly unwind DNA, but more likely acts by driving ATP-dependent conformational changes within the whole enzyme. A beta hairpin in the 'latch' region of the N-terminal domain plays a regulatory role in the enzyme, repressing topoisomerase activity in the absence of ATP and preventing the enzyme from acting as an ATP-independent relaxing enzyme; it also helps to coordinate nucleotide hydrolysis by the ATPase domain with the supercoiling activity of the topoisomerase domain.</text>
</comment>
<comment type="miscellaneous">
    <text evidence="1">This enzyme is the only unique feature of hyperthermophilic bacteria/archaea known and seems to be essential for adaptation to life at high temperatures. It may play a role in stabilization of DNA at high temperatures.</text>
</comment>
<comment type="similarity">
    <text evidence="1">In the N-terminal section; belongs to the DEAD box helicase family. DDVD subfamily.</text>
</comment>
<comment type="similarity">
    <text evidence="1">In the C-terminal section; belongs to the type IA topoisomerase family.</text>
</comment>
<proteinExistence type="inferred from homology"/>
<gene>
    <name evidence="1" type="primary">rgy2</name>
    <name type="ordered locus">STK_03740</name>
</gene>
<evidence type="ECO:0000255" key="1">
    <source>
        <dbReference type="HAMAP-Rule" id="MF_01125"/>
    </source>
</evidence>
<evidence type="ECO:0000255" key="2">
    <source>
        <dbReference type="PROSITE-ProRule" id="PRU01380"/>
    </source>
</evidence>
<evidence type="ECO:0000255" key="3">
    <source>
        <dbReference type="PROSITE-ProRule" id="PRU01381"/>
    </source>
</evidence>
<evidence type="ECO:0000255" key="4">
    <source>
        <dbReference type="PROSITE-ProRule" id="PRU01383"/>
    </source>
</evidence>
<reference key="1">
    <citation type="journal article" date="2001" name="DNA Res.">
        <title>Complete genome sequence of an aerobic thermoacidophilic Crenarchaeon, Sulfolobus tokodaii strain7.</title>
        <authorList>
            <person name="Kawarabayasi Y."/>
            <person name="Hino Y."/>
            <person name="Horikawa H."/>
            <person name="Jin-no K."/>
            <person name="Takahashi M."/>
            <person name="Sekine M."/>
            <person name="Baba S."/>
            <person name="Ankai A."/>
            <person name="Kosugi H."/>
            <person name="Hosoyama A."/>
            <person name="Fukui S."/>
            <person name="Nagai Y."/>
            <person name="Nishijima K."/>
            <person name="Otsuka R."/>
            <person name="Nakazawa H."/>
            <person name="Takamiya M."/>
            <person name="Kato Y."/>
            <person name="Yoshizawa T."/>
            <person name="Tanaka T."/>
            <person name="Kudoh Y."/>
            <person name="Yamazaki J."/>
            <person name="Kushida N."/>
            <person name="Oguchi A."/>
            <person name="Aoki K."/>
            <person name="Masuda S."/>
            <person name="Yanagii M."/>
            <person name="Nishimura M."/>
            <person name="Yamagishi A."/>
            <person name="Oshima T."/>
            <person name="Kikuchi H."/>
        </authorList>
    </citation>
    <scope>NUCLEOTIDE SEQUENCE [LARGE SCALE GENOMIC DNA]</scope>
    <source>
        <strain>DSM 16993 / JCM 10545 / NBRC 100140 / 7</strain>
    </source>
</reference>
<keyword id="KW-0067">ATP-binding</keyword>
<keyword id="KW-0963">Cytoplasm</keyword>
<keyword id="KW-0238">DNA-binding</keyword>
<keyword id="KW-0413">Isomerase</keyword>
<keyword id="KW-0460">Magnesium</keyword>
<keyword id="KW-0479">Metal-binding</keyword>
<keyword id="KW-0547">Nucleotide-binding</keyword>
<keyword id="KW-1185">Reference proteome</keyword>
<keyword id="KW-0799">Topoisomerase</keyword>
<keyword id="KW-0862">Zinc</keyword>
<keyword id="KW-0863">Zinc-finger</keyword>
<feature type="chain" id="PRO_0000158095" description="Reverse gyrase 2">
    <location>
        <begin position="1"/>
        <end position="1233"/>
    </location>
</feature>
<feature type="domain" description="Helicase ATP-binding" evidence="1">
    <location>
        <begin position="93"/>
        <end position="296"/>
    </location>
</feature>
<feature type="domain" description="Toprim" evidence="1">
    <location>
        <begin position="610"/>
        <end position="774"/>
    </location>
</feature>
<feature type="domain" description="Topo IA-type catalytic" evidence="4">
    <location>
        <begin position="790"/>
        <end position="1233"/>
    </location>
</feature>
<feature type="zinc finger region" description="RG N-terminal-type" evidence="2">
    <location>
        <begin position="1"/>
        <end position="41"/>
    </location>
</feature>
<feature type="zinc finger region" description="RG C-terminal-type; atypical" evidence="3">
    <location>
        <begin position="691"/>
        <end position="720"/>
    </location>
</feature>
<feature type="region of interest" description="Topoisomerase I" evidence="1">
    <location>
        <begin position="606"/>
        <end position="1233"/>
    </location>
</feature>
<feature type="short sequence motif" description="DEAD box" evidence="1">
    <location>
        <begin position="212"/>
        <end position="215"/>
    </location>
</feature>
<feature type="active site" description="O-(5'-phospho-DNA)-tyrosine intermediate" evidence="4">
    <location>
        <position position="947"/>
    </location>
</feature>
<feature type="binding site" evidence="1">
    <location>
        <position position="13"/>
    </location>
    <ligand>
        <name>Zn(2+)</name>
        <dbReference type="ChEBI" id="CHEBI:29105"/>
        <label>1</label>
    </ligand>
</feature>
<feature type="binding site" evidence="1">
    <location>
        <position position="16"/>
    </location>
    <ligand>
        <name>Zn(2+)</name>
        <dbReference type="ChEBI" id="CHEBI:29105"/>
        <label>1</label>
    </ligand>
</feature>
<feature type="binding site" evidence="1">
    <location>
        <position position="31"/>
    </location>
    <ligand>
        <name>Zn(2+)</name>
        <dbReference type="ChEBI" id="CHEBI:29105"/>
        <label>1</label>
    </ligand>
</feature>
<feature type="binding site" evidence="1">
    <location>
        <position position="34"/>
    </location>
    <ligand>
        <name>Zn(2+)</name>
        <dbReference type="ChEBI" id="CHEBI:29105"/>
        <label>1</label>
    </ligand>
</feature>
<feature type="binding site" evidence="1">
    <location>
        <position position="89"/>
    </location>
    <ligand>
        <name>ATP</name>
        <dbReference type="ChEBI" id="CHEBI:30616"/>
    </ligand>
</feature>
<feature type="binding site" evidence="1">
    <location>
        <begin position="106"/>
        <end position="113"/>
    </location>
    <ligand>
        <name>ATP</name>
        <dbReference type="ChEBI" id="CHEBI:30616"/>
    </ligand>
</feature>
<feature type="binding site" evidence="1">
    <location>
        <position position="616"/>
    </location>
    <ligand>
        <name>Mg(2+)</name>
        <dbReference type="ChEBI" id="CHEBI:18420"/>
        <note>catalytic</note>
    </ligand>
</feature>
<feature type="binding site" evidence="3">
    <location>
        <position position="694"/>
    </location>
    <ligand>
        <name>Zn(2+)</name>
        <dbReference type="ChEBI" id="CHEBI:29105"/>
        <label>2</label>
    </ligand>
</feature>
<feature type="binding site" evidence="3">
    <location>
        <position position="698"/>
    </location>
    <ligand>
        <name>Zn(2+)</name>
        <dbReference type="ChEBI" id="CHEBI:29105"/>
        <label>2</label>
    </ligand>
</feature>
<feature type="binding site" evidence="3">
    <location>
        <position position="709"/>
    </location>
    <ligand>
        <name>Zn(2+)</name>
        <dbReference type="ChEBI" id="CHEBI:29105"/>
        <label>2</label>
    </ligand>
</feature>
<feature type="binding site" evidence="3">
    <location>
        <position position="712"/>
    </location>
    <ligand>
        <name>Zn(2+)</name>
        <dbReference type="ChEBI" id="CHEBI:29105"/>
        <label>2</label>
    </ligand>
</feature>
<feature type="binding site" evidence="1">
    <location>
        <position position="743"/>
    </location>
    <ligand>
        <name>Mg(2+)</name>
        <dbReference type="ChEBI" id="CHEBI:18420"/>
        <note>catalytic</note>
    </ligand>
</feature>
<accession>Q975P6</accession>
<accession>F9VMV8</accession>
<dbReference type="EC" id="5.6.2.-" evidence="1"/>
<dbReference type="EMBL" id="BA000023">
    <property type="protein sequence ID" value="BAK54255.1"/>
    <property type="molecule type" value="Genomic_DNA"/>
</dbReference>
<dbReference type="RefSeq" id="WP_052846290.1">
    <property type="nucleotide sequence ID" value="NC_003106.2"/>
</dbReference>
<dbReference type="SMR" id="Q975P6"/>
<dbReference type="STRING" id="273063.STK_03740"/>
<dbReference type="GeneID" id="1458298"/>
<dbReference type="KEGG" id="sto:STK_03740"/>
<dbReference type="PATRIC" id="fig|273063.9.peg.435"/>
<dbReference type="eggNOG" id="arCOG01526">
    <property type="taxonomic scope" value="Archaea"/>
</dbReference>
<dbReference type="OrthoDB" id="30963at2157"/>
<dbReference type="Proteomes" id="UP000001015">
    <property type="component" value="Chromosome"/>
</dbReference>
<dbReference type="GO" id="GO:0005737">
    <property type="term" value="C:cytoplasm"/>
    <property type="evidence" value="ECO:0007669"/>
    <property type="project" value="UniProtKB-SubCell"/>
</dbReference>
<dbReference type="GO" id="GO:0005524">
    <property type="term" value="F:ATP binding"/>
    <property type="evidence" value="ECO:0007669"/>
    <property type="project" value="UniProtKB-UniRule"/>
</dbReference>
<dbReference type="GO" id="GO:0016887">
    <property type="term" value="F:ATP hydrolysis activity"/>
    <property type="evidence" value="ECO:0007669"/>
    <property type="project" value="InterPro"/>
</dbReference>
<dbReference type="GO" id="GO:0003677">
    <property type="term" value="F:DNA binding"/>
    <property type="evidence" value="ECO:0007669"/>
    <property type="project" value="UniProtKB-UniRule"/>
</dbReference>
<dbReference type="GO" id="GO:0003918">
    <property type="term" value="F:DNA topoisomerase type II (double strand cut, ATP-hydrolyzing) activity"/>
    <property type="evidence" value="ECO:0007669"/>
    <property type="project" value="UniProtKB-EC"/>
</dbReference>
<dbReference type="GO" id="GO:0160097">
    <property type="term" value="F:reverse gyrase activity"/>
    <property type="evidence" value="ECO:0007669"/>
    <property type="project" value="UniProtKB-UniRule"/>
</dbReference>
<dbReference type="GO" id="GO:0008270">
    <property type="term" value="F:zinc ion binding"/>
    <property type="evidence" value="ECO:0007669"/>
    <property type="project" value="UniProtKB-UniRule"/>
</dbReference>
<dbReference type="GO" id="GO:0006265">
    <property type="term" value="P:DNA topological change"/>
    <property type="evidence" value="ECO:0007669"/>
    <property type="project" value="UniProtKB-UniRule"/>
</dbReference>
<dbReference type="CDD" id="cd17924">
    <property type="entry name" value="DDXDc_reverse_gyrase"/>
    <property type="match status" value="1"/>
</dbReference>
<dbReference type="CDD" id="cd18798">
    <property type="entry name" value="SF2_C_reverse_gyrase"/>
    <property type="match status" value="1"/>
</dbReference>
<dbReference type="CDD" id="cd00186">
    <property type="entry name" value="TOP1Ac"/>
    <property type="match status" value="1"/>
</dbReference>
<dbReference type="CDD" id="cd03361">
    <property type="entry name" value="TOPRIM_TopoIA_RevGyr"/>
    <property type="match status" value="1"/>
</dbReference>
<dbReference type="Gene3D" id="2.60.510.20">
    <property type="match status" value="1"/>
</dbReference>
<dbReference type="Gene3D" id="3.40.50.140">
    <property type="match status" value="1"/>
</dbReference>
<dbReference type="Gene3D" id="3.40.50.300">
    <property type="entry name" value="P-loop containing nucleotide triphosphate hydrolases"/>
    <property type="match status" value="3"/>
</dbReference>
<dbReference type="Gene3D" id="1.10.460.10">
    <property type="entry name" value="Topoisomerase I, domain 2"/>
    <property type="match status" value="1"/>
</dbReference>
<dbReference type="Gene3D" id="1.10.290.10">
    <property type="entry name" value="Topoisomerase I, domain 4"/>
    <property type="match status" value="1"/>
</dbReference>
<dbReference type="HAMAP" id="MF_01125">
    <property type="entry name" value="Reverse_gyrase"/>
    <property type="match status" value="1"/>
</dbReference>
<dbReference type="InterPro" id="IPR003593">
    <property type="entry name" value="AAA+_ATPase"/>
</dbReference>
<dbReference type="InterPro" id="IPR011545">
    <property type="entry name" value="DEAD/DEAH_box_helicase_dom"/>
</dbReference>
<dbReference type="InterPro" id="IPR014001">
    <property type="entry name" value="Helicase_ATP-bd"/>
</dbReference>
<dbReference type="InterPro" id="IPR027417">
    <property type="entry name" value="P-loop_NTPase"/>
</dbReference>
<dbReference type="InterPro" id="IPR005736">
    <property type="entry name" value="Reverse_gyrase"/>
</dbReference>
<dbReference type="InterPro" id="IPR003601">
    <property type="entry name" value="Topo_IA_2"/>
</dbReference>
<dbReference type="InterPro" id="IPR013497">
    <property type="entry name" value="Topo_IA_cen"/>
</dbReference>
<dbReference type="InterPro" id="IPR013824">
    <property type="entry name" value="Topo_IA_cen_sub1"/>
</dbReference>
<dbReference type="InterPro" id="IPR013826">
    <property type="entry name" value="Topo_IA_cen_sub3"/>
</dbReference>
<dbReference type="InterPro" id="IPR023405">
    <property type="entry name" value="Topo_IA_core_domain"/>
</dbReference>
<dbReference type="InterPro" id="IPR003602">
    <property type="entry name" value="Topo_IA_DNA-bd_dom"/>
</dbReference>
<dbReference type="InterPro" id="IPR006171">
    <property type="entry name" value="TOPRIM_dom"/>
</dbReference>
<dbReference type="InterPro" id="IPR034142">
    <property type="entry name" value="TOPRIM_RevGyr"/>
</dbReference>
<dbReference type="InterPro" id="IPR040569">
    <property type="entry name" value="Znf_Rg"/>
</dbReference>
<dbReference type="NCBIfam" id="TIGR01054">
    <property type="entry name" value="rgy"/>
    <property type="match status" value="1"/>
</dbReference>
<dbReference type="PANTHER" id="PTHR43505">
    <property type="entry name" value="REVERSE GYRASE"/>
    <property type="match status" value="1"/>
</dbReference>
<dbReference type="PANTHER" id="PTHR43505:SF1">
    <property type="entry name" value="REVERSE GYRASE"/>
    <property type="match status" value="1"/>
</dbReference>
<dbReference type="Pfam" id="PF00270">
    <property type="entry name" value="DEAD"/>
    <property type="match status" value="1"/>
</dbReference>
<dbReference type="Pfam" id="PF01131">
    <property type="entry name" value="Topoisom_bac"/>
    <property type="match status" value="1"/>
</dbReference>
<dbReference type="Pfam" id="PF01751">
    <property type="entry name" value="Toprim"/>
    <property type="match status" value="1"/>
</dbReference>
<dbReference type="Pfam" id="PF17915">
    <property type="entry name" value="zf_Rg"/>
    <property type="match status" value="1"/>
</dbReference>
<dbReference type="PRINTS" id="PR00417">
    <property type="entry name" value="PRTPISMRASEI"/>
</dbReference>
<dbReference type="SMART" id="SM00382">
    <property type="entry name" value="AAA"/>
    <property type="match status" value="1"/>
</dbReference>
<dbReference type="SMART" id="SM00487">
    <property type="entry name" value="DEXDc"/>
    <property type="match status" value="1"/>
</dbReference>
<dbReference type="SMART" id="SM00437">
    <property type="entry name" value="TOP1Ac"/>
    <property type="match status" value="1"/>
</dbReference>
<dbReference type="SMART" id="SM00436">
    <property type="entry name" value="TOP1Bc"/>
    <property type="match status" value="1"/>
</dbReference>
<dbReference type="SMART" id="SM00493">
    <property type="entry name" value="TOPRIM"/>
    <property type="match status" value="1"/>
</dbReference>
<dbReference type="SUPFAM" id="SSF52540">
    <property type="entry name" value="P-loop containing nucleoside triphosphate hydrolases"/>
    <property type="match status" value="2"/>
</dbReference>
<dbReference type="SUPFAM" id="SSF56712">
    <property type="entry name" value="Prokaryotic type I DNA topoisomerase"/>
    <property type="match status" value="1"/>
</dbReference>
<dbReference type="PROSITE" id="PS51192">
    <property type="entry name" value="HELICASE_ATP_BIND_1"/>
    <property type="match status" value="1"/>
</dbReference>
<dbReference type="PROSITE" id="PS52039">
    <property type="entry name" value="TOPO_IA_2"/>
    <property type="match status" value="1"/>
</dbReference>
<dbReference type="PROSITE" id="PS50880">
    <property type="entry name" value="TOPRIM"/>
    <property type="match status" value="1"/>
</dbReference>
<dbReference type="PROSITE" id="PS52037">
    <property type="entry name" value="ZF_RG_C"/>
    <property type="match status" value="1"/>
</dbReference>
<dbReference type="PROSITE" id="PS52036">
    <property type="entry name" value="ZF_RG_N"/>
    <property type="match status" value="1"/>
</dbReference>
<name>RGYR2_SULTO</name>
<organism>
    <name type="scientific">Sulfurisphaera tokodaii (strain DSM 16993 / JCM 10545 / NBRC 100140 / 7)</name>
    <name type="common">Sulfolobus tokodaii</name>
    <dbReference type="NCBI Taxonomy" id="273063"/>
    <lineage>
        <taxon>Archaea</taxon>
        <taxon>Thermoproteota</taxon>
        <taxon>Thermoprotei</taxon>
        <taxon>Sulfolobales</taxon>
        <taxon>Sulfolobaceae</taxon>
        <taxon>Sulfurisphaera</taxon>
    </lineage>
</organism>
<sequence length="1233" mass="141175">MNTIPSSNYLSSCPNCGRVISAERLYKGSVCSECLEEDREFNSIRELVNELSRLNKLNRLNYIKEVLREYDIFVELFKRIIGFPPFGPQKSWIIRVLRKESFAIIAPPGLGKTTFGIITSLYFSSKNFRSILIFPTRSLVKQAVDRISMYSNKTNIETKLLYYHSGINESQKQELYKALNAGDFNIFIATNRFFIDKINELKNIKYDFMFVDDVDTALKSSKSAETILNLAGFSKDDILSVKELLRKSREDESVYTKIQEIRGNKLKGKTIVFSSATLTRGNPVLSALMGFRPGSSVIYLRKIIDTYAYLPNNDDDVVNLLKELLNKLGEGGLIFVPVDKGQEYAKFLEAKLSDSFNVVTITSSNTNKIEDFANGNIYALIGSATHYGILVRGIDIPWRVKYAIFVGIPKFKFKIGEVMNLVALSRILSMIGLITKDQDIVRLAGRVRGKLRKLSPAAISMLTNQAREGKLEDETLLRAYEVVNKYLEDKDILKKIAELGDLVISNGYILMPDYLTYIQASGRTSRIYGGELTTGLSVLLIDDINLFNILNRKLSLILDEIIWQELQIKKNKIGSSDLTEIINKINEERERILKVKKEGEIEPSLQKVKTVLFIVESPNKAKTISNFFAKPSIRQLENIRAFETVLEDKILIVAATGGHVYDLTTQNIGIYGVEVQQQNSHFNFIPYYNTIKKCINGHQFTDFEQGNQCPKCHTTQIILDKTATIDALRKLALEADEILIGTDPDTEGEKIAWDIYLALKPFNSNIKRAEFHEVTRKAILQAINNPRPFNVNLVKSQIVRRIEDRWIGFKLSTKLQEDFWKEYCKNYNCKSEENKNLSAGRVQSPVLNWIVNRYDEYNANKTKIYYGSIKGIDELKFYVFKQNEKIRKNANIYVKIINTKVLEEEINPLPPYTTDTLLYDANQFYGISASETMKIAQDLFELGLITYHRTDSTRISNTGISIAEGYLKQIAGENYTKIFKPRSWGEGGAHEAIRPTRPLDVDQLRLLVDEGEIELAKKITRAHFLIYDLIFRRFITSQLVPLKVIKERIEYKICEDSNCNSELKTLQNYSEFITDIKLPIQLDYSKFLYLPTTRIIKNSIIKKLQETTGSTNAELVSKIQLTGSFVKSTVNLYTQAELVAEMKRKEIGRPSTYATIISTILKRGYVIESKKTKKLIPTQLGKEVNKYLNQKFSSFVSEERTRNLLQLMDMVEQGKQDYIQILKDIYYEIKSIR</sequence>
<protein>
    <recommendedName>
        <fullName evidence="1">Reverse gyrase 2</fullName>
        <ecNumber evidence="1">5.6.2.-</ecNumber>
    </recommendedName>
</protein>